<comment type="function">
    <text evidence="1">Catalyzes the condensation of carbamoyl phosphate and aspartate to form carbamoyl aspartate and inorganic phosphate, the committed step in the de novo pyrimidine nucleotide biosynthesis pathway.</text>
</comment>
<comment type="catalytic activity">
    <reaction evidence="1">
        <text>carbamoyl phosphate + L-aspartate = N-carbamoyl-L-aspartate + phosphate + H(+)</text>
        <dbReference type="Rhea" id="RHEA:20013"/>
        <dbReference type="ChEBI" id="CHEBI:15378"/>
        <dbReference type="ChEBI" id="CHEBI:29991"/>
        <dbReference type="ChEBI" id="CHEBI:32814"/>
        <dbReference type="ChEBI" id="CHEBI:43474"/>
        <dbReference type="ChEBI" id="CHEBI:58228"/>
        <dbReference type="EC" id="2.1.3.2"/>
    </reaction>
</comment>
<comment type="pathway">
    <text evidence="1">Pyrimidine metabolism; UMP biosynthesis via de novo pathway; (S)-dihydroorotate from bicarbonate: step 2/3.</text>
</comment>
<comment type="subunit">
    <text evidence="1">Heterododecamer (2C3:3R2) of six catalytic PyrB chains organized as two trimers (C3), and six regulatory PyrI chains organized as three dimers (R2).</text>
</comment>
<comment type="similarity">
    <text evidence="1">Belongs to the aspartate/ornithine carbamoyltransferase superfamily. ATCase family.</text>
</comment>
<accession>A4IM30</accession>
<protein>
    <recommendedName>
        <fullName evidence="1">Aspartate carbamoyltransferase catalytic subunit</fullName>
        <ecNumber evidence="1">2.1.3.2</ecNumber>
    </recommendedName>
    <alternativeName>
        <fullName evidence="1">Aspartate transcarbamylase</fullName>
        <shortName evidence="1">ATCase</shortName>
    </alternativeName>
</protein>
<name>PYRB_GEOTN</name>
<evidence type="ECO:0000255" key="1">
    <source>
        <dbReference type="HAMAP-Rule" id="MF_00001"/>
    </source>
</evidence>
<dbReference type="EC" id="2.1.3.2" evidence="1"/>
<dbReference type="EMBL" id="CP000557">
    <property type="protein sequence ID" value="ABO66384.1"/>
    <property type="molecule type" value="Genomic_DNA"/>
</dbReference>
<dbReference type="RefSeq" id="WP_008878659.1">
    <property type="nucleotide sequence ID" value="NC_009328.1"/>
</dbReference>
<dbReference type="SMR" id="A4IM30"/>
<dbReference type="KEGG" id="gtn:GTNG_1006"/>
<dbReference type="eggNOG" id="COG0540">
    <property type="taxonomic scope" value="Bacteria"/>
</dbReference>
<dbReference type="HOGENOM" id="CLU_043846_2_1_9"/>
<dbReference type="UniPathway" id="UPA00070">
    <property type="reaction ID" value="UER00116"/>
</dbReference>
<dbReference type="Proteomes" id="UP000001578">
    <property type="component" value="Chromosome"/>
</dbReference>
<dbReference type="GO" id="GO:0005829">
    <property type="term" value="C:cytosol"/>
    <property type="evidence" value="ECO:0007669"/>
    <property type="project" value="TreeGrafter"/>
</dbReference>
<dbReference type="GO" id="GO:0016597">
    <property type="term" value="F:amino acid binding"/>
    <property type="evidence" value="ECO:0007669"/>
    <property type="project" value="InterPro"/>
</dbReference>
<dbReference type="GO" id="GO:0004070">
    <property type="term" value="F:aspartate carbamoyltransferase activity"/>
    <property type="evidence" value="ECO:0007669"/>
    <property type="project" value="UniProtKB-UniRule"/>
</dbReference>
<dbReference type="GO" id="GO:0006207">
    <property type="term" value="P:'de novo' pyrimidine nucleobase biosynthetic process"/>
    <property type="evidence" value="ECO:0007669"/>
    <property type="project" value="InterPro"/>
</dbReference>
<dbReference type="GO" id="GO:0044205">
    <property type="term" value="P:'de novo' UMP biosynthetic process"/>
    <property type="evidence" value="ECO:0007669"/>
    <property type="project" value="UniProtKB-UniRule"/>
</dbReference>
<dbReference type="GO" id="GO:0006520">
    <property type="term" value="P:amino acid metabolic process"/>
    <property type="evidence" value="ECO:0007669"/>
    <property type="project" value="InterPro"/>
</dbReference>
<dbReference type="FunFam" id="3.40.50.1370:FF:000011">
    <property type="entry name" value="Aspartate carbamoyltransferase"/>
    <property type="match status" value="1"/>
</dbReference>
<dbReference type="Gene3D" id="3.40.50.1370">
    <property type="entry name" value="Aspartate/ornithine carbamoyltransferase"/>
    <property type="match status" value="2"/>
</dbReference>
<dbReference type="HAMAP" id="MF_00001">
    <property type="entry name" value="Asp_carb_tr"/>
    <property type="match status" value="1"/>
</dbReference>
<dbReference type="InterPro" id="IPR006132">
    <property type="entry name" value="Asp/Orn_carbamoyltranf_P-bd"/>
</dbReference>
<dbReference type="InterPro" id="IPR006130">
    <property type="entry name" value="Asp/Orn_carbamoylTrfase"/>
</dbReference>
<dbReference type="InterPro" id="IPR036901">
    <property type="entry name" value="Asp/Orn_carbamoylTrfase_sf"/>
</dbReference>
<dbReference type="InterPro" id="IPR002082">
    <property type="entry name" value="Asp_carbamoyltransf"/>
</dbReference>
<dbReference type="InterPro" id="IPR006131">
    <property type="entry name" value="Asp_carbamoyltransf_Asp/Orn-bd"/>
</dbReference>
<dbReference type="NCBIfam" id="TIGR00670">
    <property type="entry name" value="asp_carb_tr"/>
    <property type="match status" value="1"/>
</dbReference>
<dbReference type="NCBIfam" id="NF002032">
    <property type="entry name" value="PRK00856.1"/>
    <property type="match status" value="1"/>
</dbReference>
<dbReference type="PANTHER" id="PTHR45753:SF6">
    <property type="entry name" value="ASPARTATE CARBAMOYLTRANSFERASE"/>
    <property type="match status" value="1"/>
</dbReference>
<dbReference type="PANTHER" id="PTHR45753">
    <property type="entry name" value="ORNITHINE CARBAMOYLTRANSFERASE, MITOCHONDRIAL"/>
    <property type="match status" value="1"/>
</dbReference>
<dbReference type="Pfam" id="PF00185">
    <property type="entry name" value="OTCace"/>
    <property type="match status" value="1"/>
</dbReference>
<dbReference type="Pfam" id="PF02729">
    <property type="entry name" value="OTCace_N"/>
    <property type="match status" value="1"/>
</dbReference>
<dbReference type="PRINTS" id="PR00100">
    <property type="entry name" value="AOTCASE"/>
</dbReference>
<dbReference type="PRINTS" id="PR00101">
    <property type="entry name" value="ATCASE"/>
</dbReference>
<dbReference type="SUPFAM" id="SSF53671">
    <property type="entry name" value="Aspartate/ornithine carbamoyltransferase"/>
    <property type="match status" value="1"/>
</dbReference>
<dbReference type="PROSITE" id="PS00097">
    <property type="entry name" value="CARBAMOYLTRANSFERASE"/>
    <property type="match status" value="1"/>
</dbReference>
<reference key="1">
    <citation type="journal article" date="2007" name="Proc. Natl. Acad. Sci. U.S.A.">
        <title>Genome and proteome of long-chain alkane degrading Geobacillus thermodenitrificans NG80-2 isolated from a deep-subsurface oil reservoir.</title>
        <authorList>
            <person name="Feng L."/>
            <person name="Wang W."/>
            <person name="Cheng J."/>
            <person name="Ren Y."/>
            <person name="Zhao G."/>
            <person name="Gao C."/>
            <person name="Tang Y."/>
            <person name="Liu X."/>
            <person name="Han W."/>
            <person name="Peng X."/>
            <person name="Liu R."/>
            <person name="Wang L."/>
        </authorList>
    </citation>
    <scope>NUCLEOTIDE SEQUENCE [LARGE SCALE GENOMIC DNA]</scope>
    <source>
        <strain>NG80-2</strain>
    </source>
</reference>
<keyword id="KW-0665">Pyrimidine biosynthesis</keyword>
<keyword id="KW-0808">Transferase</keyword>
<gene>
    <name evidence="1" type="primary">pyrB</name>
    <name type="ordered locus">GTNG_1006</name>
</gene>
<feature type="chain" id="PRO_0000301576" description="Aspartate carbamoyltransferase catalytic subunit">
    <location>
        <begin position="1"/>
        <end position="308"/>
    </location>
</feature>
<feature type="binding site" evidence="1">
    <location>
        <position position="49"/>
    </location>
    <ligand>
        <name>carbamoyl phosphate</name>
        <dbReference type="ChEBI" id="CHEBI:58228"/>
    </ligand>
</feature>
<feature type="binding site" evidence="1">
    <location>
        <position position="50"/>
    </location>
    <ligand>
        <name>carbamoyl phosphate</name>
        <dbReference type="ChEBI" id="CHEBI:58228"/>
    </ligand>
</feature>
<feature type="binding site" evidence="1">
    <location>
        <position position="77"/>
    </location>
    <ligand>
        <name>L-aspartate</name>
        <dbReference type="ChEBI" id="CHEBI:29991"/>
    </ligand>
</feature>
<feature type="binding site" evidence="1">
    <location>
        <position position="99"/>
    </location>
    <ligand>
        <name>carbamoyl phosphate</name>
        <dbReference type="ChEBI" id="CHEBI:58228"/>
    </ligand>
</feature>
<feature type="binding site" evidence="1">
    <location>
        <position position="127"/>
    </location>
    <ligand>
        <name>carbamoyl phosphate</name>
        <dbReference type="ChEBI" id="CHEBI:58228"/>
    </ligand>
</feature>
<feature type="binding site" evidence="1">
    <location>
        <position position="130"/>
    </location>
    <ligand>
        <name>carbamoyl phosphate</name>
        <dbReference type="ChEBI" id="CHEBI:58228"/>
    </ligand>
</feature>
<feature type="binding site" evidence="1">
    <location>
        <position position="160"/>
    </location>
    <ligand>
        <name>L-aspartate</name>
        <dbReference type="ChEBI" id="CHEBI:29991"/>
    </ligand>
</feature>
<feature type="binding site" evidence="1">
    <location>
        <position position="211"/>
    </location>
    <ligand>
        <name>L-aspartate</name>
        <dbReference type="ChEBI" id="CHEBI:29991"/>
    </ligand>
</feature>
<feature type="binding site" evidence="1">
    <location>
        <position position="252"/>
    </location>
    <ligand>
        <name>carbamoyl phosphate</name>
        <dbReference type="ChEBI" id="CHEBI:58228"/>
    </ligand>
</feature>
<feature type="binding site" evidence="1">
    <location>
        <position position="253"/>
    </location>
    <ligand>
        <name>carbamoyl phosphate</name>
        <dbReference type="ChEBI" id="CHEBI:58228"/>
    </ligand>
</feature>
<sequence length="308" mass="34702">MAHLLTLSELSLSEINRLLDEAETFRNGRPWHPATPMYVANLFFEPSTRTKCSFEMAERKLGLHVIPFDPERSSVQKGETLYDTVKTLEAIGVDAVVIRHHEDAYFEALRHSVGVSIINAGDGCGHHPTQSLLDLLTIRQEFGTFAGLTVVIIGDIRHSRVARSNAEVLTRLGANVLFSGPPEWEDDMNLHGTYVEIDEAIARADVVMLLRIQHERHAEKMGLTKEEYHQQYGLTLERAQLMKPGAIILHPAPVNRGVEIASQLVEAKPSRIFKQMENGVYVRMAVLKRAIEGRMQHGHVVEKWHVVQ</sequence>
<proteinExistence type="inferred from homology"/>
<organism>
    <name type="scientific">Geobacillus thermodenitrificans (strain NG80-2)</name>
    <dbReference type="NCBI Taxonomy" id="420246"/>
    <lineage>
        <taxon>Bacteria</taxon>
        <taxon>Bacillati</taxon>
        <taxon>Bacillota</taxon>
        <taxon>Bacilli</taxon>
        <taxon>Bacillales</taxon>
        <taxon>Anoxybacillaceae</taxon>
        <taxon>Geobacillus</taxon>
    </lineage>
</organism>